<reference key="1">
    <citation type="journal article" date="1994" name="Microbiology">
        <title>Characterization and sequence of PhoC, the principal phosphate-irrepressible acid phosphatase of Morganella morganii.</title>
        <authorList>
            <person name="Thaller M.C."/>
            <person name="Berlutti F."/>
            <person name="Schippa S."/>
            <person name="Lombardi G."/>
            <person name="Rossolini G.M."/>
        </authorList>
    </citation>
    <scope>NUCLEOTIDE SEQUENCE [GENOMIC DNA]</scope>
    <scope>PROTEIN SEQUENCE OF 21-40</scope>
    <source>
        <strain>RS12</strain>
    </source>
</reference>
<reference key="2">
    <citation type="journal article" date="2000" name="Appl. Environ. Microbiol.">
        <title>Phosphorylation of nucleosides by the mutated acid phosphatase from Morganella morganii.</title>
        <authorList>
            <person name="Mihara Y."/>
            <person name="Utagawa T."/>
            <person name="Yamada H."/>
            <person name="Asano Y."/>
        </authorList>
    </citation>
    <scope>NUCLEOTIDE SEQUENCE [GENOMIC DNA]</scope>
    <source>
        <strain>ATCC 8019 / CCM 680 / DSM 30117 / NCIMB 10466</strain>
    </source>
</reference>
<dbReference type="EC" id="3.1.3.2"/>
<dbReference type="EMBL" id="X64444">
    <property type="protein sequence ID" value="CAA45774.1"/>
    <property type="molecule type" value="Genomic_DNA"/>
</dbReference>
<dbReference type="EMBL" id="AB035805">
    <property type="protein sequence ID" value="BAA96744.1"/>
    <property type="molecule type" value="Genomic_DNA"/>
</dbReference>
<dbReference type="PIR" id="S19187">
    <property type="entry name" value="S19187"/>
</dbReference>
<dbReference type="RefSeq" id="WP_004235240.1">
    <property type="nucleotide sequence ID" value="NZ_WJFN01000003.1"/>
</dbReference>
<dbReference type="SMR" id="P28581"/>
<dbReference type="STRING" id="582.AL531_08310"/>
<dbReference type="GeneID" id="93360182"/>
<dbReference type="PATRIC" id="fig|582.25.peg.1493"/>
<dbReference type="GO" id="GO:0030288">
    <property type="term" value="C:outer membrane-bounded periplasmic space"/>
    <property type="evidence" value="ECO:0007669"/>
    <property type="project" value="InterPro"/>
</dbReference>
<dbReference type="GO" id="GO:0003993">
    <property type="term" value="F:acid phosphatase activity"/>
    <property type="evidence" value="ECO:0007669"/>
    <property type="project" value="UniProtKB-EC"/>
</dbReference>
<dbReference type="CDD" id="cd03397">
    <property type="entry name" value="PAP2_acid_phosphatase"/>
    <property type="match status" value="1"/>
</dbReference>
<dbReference type="Gene3D" id="1.20.144.10">
    <property type="entry name" value="Phosphatidic acid phosphatase type 2/haloperoxidase"/>
    <property type="match status" value="1"/>
</dbReference>
<dbReference type="InterPro" id="IPR001011">
    <property type="entry name" value="Acid_Pase_classA_bac"/>
</dbReference>
<dbReference type="InterPro" id="IPR018296">
    <property type="entry name" value="Acid_Pase_classA_bac_CS"/>
</dbReference>
<dbReference type="InterPro" id="IPR054904">
    <property type="entry name" value="Acid_Phosphatase_PhoC"/>
</dbReference>
<dbReference type="InterPro" id="IPR036938">
    <property type="entry name" value="P_Acid_Pase_2/haloperoxi_sf"/>
</dbReference>
<dbReference type="InterPro" id="IPR000326">
    <property type="entry name" value="P_Acid_Pase_2/haloperoxidase"/>
</dbReference>
<dbReference type="NCBIfam" id="NF045654">
    <property type="entry name" value="APhasePhoC"/>
    <property type="match status" value="1"/>
</dbReference>
<dbReference type="Pfam" id="PF01569">
    <property type="entry name" value="PAP2"/>
    <property type="match status" value="1"/>
</dbReference>
<dbReference type="PIRSF" id="PIRSF000897">
    <property type="entry name" value="Acid_Ptase_ClsA"/>
    <property type="match status" value="1"/>
</dbReference>
<dbReference type="PRINTS" id="PR00483">
    <property type="entry name" value="BACPHPHTASE"/>
</dbReference>
<dbReference type="SMART" id="SM00014">
    <property type="entry name" value="acidPPc"/>
    <property type="match status" value="1"/>
</dbReference>
<dbReference type="SUPFAM" id="SSF48317">
    <property type="entry name" value="Acid phosphatase/Vanadium-dependent haloperoxidase"/>
    <property type="match status" value="1"/>
</dbReference>
<dbReference type="PROSITE" id="PS01157">
    <property type="entry name" value="ACID_PHOSPH_CL_A"/>
    <property type="match status" value="1"/>
</dbReference>
<accession>P28581</accession>
<protein>
    <recommendedName>
        <fullName>Major phosphate-irrepressible acid phosphatase</fullName>
        <shortName>HPAP</shortName>
        <ecNumber>3.1.3.2</ecNumber>
    </recommendedName>
</protein>
<comment type="catalytic activity">
    <reaction>
        <text>a phosphate monoester + H2O = an alcohol + phosphate</text>
        <dbReference type="Rhea" id="RHEA:15017"/>
        <dbReference type="ChEBI" id="CHEBI:15377"/>
        <dbReference type="ChEBI" id="CHEBI:30879"/>
        <dbReference type="ChEBI" id="CHEBI:43474"/>
        <dbReference type="ChEBI" id="CHEBI:67140"/>
        <dbReference type="EC" id="3.1.3.2"/>
    </reaction>
</comment>
<comment type="biophysicochemical properties">
    <phDependence>
        <text>Optimum pH is about 6.</text>
    </phDependence>
</comment>
<comment type="subunit">
    <text>Homotetramer.</text>
</comment>
<comment type="subcellular location">
    <subcellularLocation>
        <location>Periplasm</location>
    </subcellularLocation>
</comment>
<comment type="similarity">
    <text evidence="2">Belongs to the class A bacterial acid phosphatase family.</text>
</comment>
<sequence length="249" mass="26999">MKKNIIAGCLFSLFSLSALAAIPAGNDATTKPDLYYLKNEQAIDSLKLLPPPPEVGSIQFLNDQAMYEKGRMLRNTERGKQAQADADLAAGGVATAFSGAFGYPITEKDSPELYKLLTNMIEDAGDLATRSAKEHYMRIRPFAFYGTETCNTKDQKKLSTNGSYPSGHTSIGWATALVLAEVNPANQDAILERGYQLGQSRVICGYHWQSDVDAARIVGSAAVATLHSDPAFQAQLAKAKQEFAQKSQK</sequence>
<proteinExistence type="evidence at protein level"/>
<name>PHOC_MORMO</name>
<organism>
    <name type="scientific">Morganella morganii</name>
    <name type="common">Proteus morganii</name>
    <dbReference type="NCBI Taxonomy" id="582"/>
    <lineage>
        <taxon>Bacteria</taxon>
        <taxon>Pseudomonadati</taxon>
        <taxon>Pseudomonadota</taxon>
        <taxon>Gammaproteobacteria</taxon>
        <taxon>Enterobacterales</taxon>
        <taxon>Morganellaceae</taxon>
        <taxon>Morganella</taxon>
    </lineage>
</organism>
<keyword id="KW-0903">Direct protein sequencing</keyword>
<keyword id="KW-0378">Hydrolase</keyword>
<keyword id="KW-0574">Periplasm</keyword>
<keyword id="KW-0732">Signal</keyword>
<feature type="signal peptide" evidence="1">
    <location>
        <begin position="1"/>
        <end position="20"/>
    </location>
</feature>
<feature type="chain" id="PRO_0000023999" description="Major phosphate-irrepressible acid phosphatase">
    <location>
        <begin position="21"/>
        <end position="249"/>
    </location>
</feature>
<gene>
    <name type="primary">phoC</name>
</gene>
<evidence type="ECO:0000269" key="1">
    <source>
    </source>
</evidence>
<evidence type="ECO:0000305" key="2"/>